<feature type="chain" id="PRO_0000082194" description="Taste receptor type 2 member 123">
    <location>
        <begin position="1"/>
        <end position="333"/>
    </location>
</feature>
<feature type="topological domain" description="Extracellular" evidence="2">
    <location>
        <begin position="1"/>
        <end position="13"/>
    </location>
</feature>
<feature type="transmembrane region" description="Helical; Name=1" evidence="2">
    <location>
        <begin position="14"/>
        <end position="34"/>
    </location>
</feature>
<feature type="topological domain" description="Cytoplasmic" evidence="2">
    <location>
        <begin position="35"/>
        <end position="60"/>
    </location>
</feature>
<feature type="transmembrane region" description="Helical; Name=2" evidence="2">
    <location>
        <begin position="61"/>
        <end position="81"/>
    </location>
</feature>
<feature type="topological domain" description="Extracellular" evidence="2">
    <location>
        <begin position="82"/>
        <end position="90"/>
    </location>
</feature>
<feature type="transmembrane region" description="Helical; Name=3" evidence="2">
    <location>
        <begin position="91"/>
        <end position="111"/>
    </location>
</feature>
<feature type="topological domain" description="Cytoplasmic" evidence="2">
    <location>
        <begin position="112"/>
        <end position="134"/>
    </location>
</feature>
<feature type="transmembrane region" description="Helical; Name=4" evidence="2">
    <location>
        <begin position="135"/>
        <end position="155"/>
    </location>
</feature>
<feature type="topological domain" description="Extracellular" evidence="2">
    <location>
        <begin position="156"/>
        <end position="205"/>
    </location>
</feature>
<feature type="transmembrane region" description="Helical; Name=5" evidence="2">
    <location>
        <begin position="206"/>
        <end position="226"/>
    </location>
</feature>
<feature type="topological domain" description="Cytoplasmic" evidence="2">
    <location>
        <begin position="227"/>
        <end position="253"/>
    </location>
</feature>
<feature type="transmembrane region" description="Helical; Name=6" evidence="2">
    <location>
        <begin position="254"/>
        <end position="274"/>
    </location>
</feature>
<feature type="topological domain" description="Extracellular" evidence="2">
    <location>
        <begin position="275"/>
        <end position="281"/>
    </location>
</feature>
<feature type="transmembrane region" description="Helical; Name=7" evidence="2">
    <location>
        <begin position="282"/>
        <end position="302"/>
    </location>
</feature>
<feature type="topological domain" description="Cytoplasmic" evidence="2">
    <location>
        <begin position="303"/>
        <end position="333"/>
    </location>
</feature>
<feature type="glycosylation site" description="N-linked (GlcNAc...) asparagine" evidence="2">
    <location>
        <position position="7"/>
    </location>
</feature>
<feature type="glycosylation site" description="N-linked (GlcNAc...) asparagine" evidence="2">
    <location>
        <position position="167"/>
    </location>
</feature>
<feature type="glycosylation site" description="N-linked (GlcNAc...) asparagine" evidence="2">
    <location>
        <position position="186"/>
    </location>
</feature>
<feature type="glycosylation site" description="N-linked (GlcNAc...) asparagine" evidence="2">
    <location>
        <position position="195"/>
    </location>
</feature>
<feature type="sequence conflict" description="In Ref. 1; AAL85202." evidence="4" ref="1">
    <original>K</original>
    <variation>E</variation>
    <location>
        <position position="5"/>
    </location>
</feature>
<feature type="sequence conflict" description="In Ref. 1; AAL85202." evidence="4" ref="1">
    <original>Y</original>
    <variation>C</variation>
    <location>
        <position position="8"/>
    </location>
</feature>
<feature type="sequence conflict" description="In Ref. 1; AAL85202." evidence="4" ref="1">
    <original>K</original>
    <variation>G</variation>
    <location>
        <position position="42"/>
    </location>
</feature>
<feature type="sequence conflict" description="In Ref. 1; AAL85202." evidence="4" ref="1">
    <original>LS</original>
    <variation>WA</variation>
    <location>
        <begin position="65"/>
        <end position="66"/>
    </location>
</feature>
<feature type="sequence conflict" description="In Ref. 1; AAL85202." evidence="4" ref="1">
    <original>C</original>
    <variation>S</variation>
    <location>
        <position position="77"/>
    </location>
</feature>
<feature type="sequence conflict" description="In Ref. 1; AAL85202." evidence="4" ref="1">
    <original>F</original>
    <variation>V</variation>
    <location>
        <position position="207"/>
    </location>
</feature>
<feature type="sequence conflict" description="In Ref. 1; AAL85202." evidence="4" ref="1">
    <original>K</original>
    <variation>S</variation>
    <location>
        <position position="238"/>
    </location>
</feature>
<feature type="sequence conflict" description="In Ref. 1; AAL85202." evidence="4" ref="1">
    <original>D</original>
    <variation>N</variation>
    <location>
        <position position="242"/>
    </location>
</feature>
<feature type="sequence conflict" description="In Ref. 1; AAL85202." evidence="4" ref="1">
    <original>Y</original>
    <variation>N</variation>
    <location>
        <position position="265"/>
    </location>
</feature>
<feature type="sequence conflict" description="In Ref. 1; AAL85202." evidence="4" ref="1">
    <original>G</original>
    <variation>A</variation>
    <location>
        <position position="292"/>
    </location>
</feature>
<reference key="1">
    <citation type="journal article" date="2002" name="Proc. Natl. Acad. Sci. U.S.A.">
        <title>Expression of bitter taste receptors of the T2R family in the gastrointestinal tract and enteroendocrine STC-1 cells.</title>
        <authorList>
            <person name="Wu S.V."/>
            <person name="Rozengurt N."/>
            <person name="Yang M."/>
            <person name="Young S.H."/>
            <person name="Sinnett-Smith J."/>
            <person name="Rozengurt E."/>
        </authorList>
    </citation>
    <scope>NUCLEOTIDE SEQUENCE [GENOMIC DNA]</scope>
    <scope>TISSUE SPECIFICITY</scope>
</reference>
<reference key="2">
    <citation type="patent" date="2001-03-15" number="WO0118050">
        <title>T2r taste receptor family.</title>
        <authorList>
            <person name="Zuker C.S."/>
            <person name="Adler J.E."/>
            <person name="Ryba N."/>
            <person name="Mueller K."/>
            <person name="Hoon M."/>
        </authorList>
    </citation>
    <scope>NUCLEOTIDE SEQUENCE [GENOMIC DNA]</scope>
</reference>
<reference key="3">
    <citation type="journal article" date="2009" name="PLoS Biol.">
        <title>Lineage-specific biology revealed by a finished genome assembly of the mouse.</title>
        <authorList>
            <person name="Church D.M."/>
            <person name="Goodstadt L."/>
            <person name="Hillier L.W."/>
            <person name="Zody M.C."/>
            <person name="Goldstein S."/>
            <person name="She X."/>
            <person name="Bult C.J."/>
            <person name="Agarwala R."/>
            <person name="Cherry J.L."/>
            <person name="DiCuccio M."/>
            <person name="Hlavina W."/>
            <person name="Kapustin Y."/>
            <person name="Meric P."/>
            <person name="Maglott D."/>
            <person name="Birtle Z."/>
            <person name="Marques A.C."/>
            <person name="Graves T."/>
            <person name="Zhou S."/>
            <person name="Teague B."/>
            <person name="Potamousis K."/>
            <person name="Churas C."/>
            <person name="Place M."/>
            <person name="Herschleb J."/>
            <person name="Runnheim R."/>
            <person name="Forrest D."/>
            <person name="Amos-Landgraf J."/>
            <person name="Schwartz D.C."/>
            <person name="Cheng Z."/>
            <person name="Lindblad-Toh K."/>
            <person name="Eichler E.E."/>
            <person name="Ponting C.P."/>
        </authorList>
    </citation>
    <scope>NUCLEOTIDE SEQUENCE [LARGE SCALE GENOMIC DNA]</scope>
    <source>
        <strain>C57BL/6J</strain>
    </source>
</reference>
<reference key="4">
    <citation type="journal article" date="2003" name="Mol. Biol. Evol.">
        <title>Adaptive diversification of bitter taste receptor genes in mammalian evolution.</title>
        <authorList>
            <person name="Shi P."/>
            <person name="Zhang J."/>
            <person name="Yang H."/>
            <person name="Zhang Y.-P."/>
        </authorList>
    </citation>
    <scope>IDENTIFICATION</scope>
</reference>
<reference key="5">
    <citation type="journal article" date="2002" name="Curr. Opin. Neurobiol.">
        <title>Receptors for bitter and sweet taste.</title>
        <authorList>
            <person name="Montmayeur J.-P."/>
            <person name="Matsunami H."/>
        </authorList>
    </citation>
    <scope>REVIEW</scope>
</reference>
<reference key="6">
    <citation type="journal article" date="2002" name="J. Biol. Chem.">
        <title>Molecular mechanisms of bitter and sweet taste transduction.</title>
        <authorList>
            <person name="Margolskee R.F."/>
        </authorList>
    </citation>
    <scope>REVIEW</scope>
</reference>
<reference key="7">
    <citation type="journal article" date="2003" name="Cell">
        <title>Coding of sweet, bitter, and umami tastes: different receptor cells sharing similar signaling pathways.</title>
        <authorList>
            <person name="Zhang Y."/>
            <person name="Hoon M.A."/>
            <person name="Chandrashekar J."/>
            <person name="Mueller K.L."/>
            <person name="Cook B."/>
            <person name="Wu D."/>
            <person name="Zuker C.S."/>
            <person name="Ryba N.J."/>
        </authorList>
    </citation>
    <scope>REVIEW</scope>
</reference>
<dbReference type="EMBL" id="AF412305">
    <property type="protein sequence ID" value="AAL85202.1"/>
    <property type="molecule type" value="Genomic_DNA"/>
</dbReference>
<dbReference type="EMBL" id="AX097844">
    <property type="status" value="NOT_ANNOTATED_CDS"/>
    <property type="molecule type" value="Genomic_DNA"/>
</dbReference>
<dbReference type="EMBL" id="AC129318">
    <property type="status" value="NOT_ANNOTATED_CDS"/>
    <property type="molecule type" value="Genomic_DNA"/>
</dbReference>
<dbReference type="EMBL" id="BK001083">
    <property type="protein sequence ID" value="DAA01222.1"/>
    <property type="molecule type" value="Genomic_DNA"/>
</dbReference>
<dbReference type="CCDS" id="CCDS20624.1"/>
<dbReference type="RefSeq" id="NP_996908.1">
    <property type="nucleotide sequence ID" value="NM_207025.1"/>
</dbReference>
<dbReference type="SMR" id="P59528"/>
<dbReference type="FunCoup" id="P59528">
    <property type="interactions" value="88"/>
</dbReference>
<dbReference type="STRING" id="10090.ENSMUSP00000071615"/>
<dbReference type="GlyCosmos" id="P59528">
    <property type="glycosylation" value="4 sites, No reported glycans"/>
</dbReference>
<dbReference type="GlyGen" id="P59528">
    <property type="glycosylation" value="4 sites"/>
</dbReference>
<dbReference type="iPTMnet" id="P59528"/>
<dbReference type="PaxDb" id="10090-ENSMUSP00000071615"/>
<dbReference type="DNASU" id="353167"/>
<dbReference type="Ensembl" id="ENSMUST00000071696.2">
    <property type="protein sequence ID" value="ENSMUSP00000071615.2"/>
    <property type="gene ID" value="ENSMUSG00000057381.2"/>
</dbReference>
<dbReference type="GeneID" id="353167"/>
<dbReference type="KEGG" id="mmu:353167"/>
<dbReference type="UCSC" id="uc009ejq.1">
    <property type="organism name" value="mouse"/>
</dbReference>
<dbReference type="AGR" id="MGI:2681264"/>
<dbReference type="CTD" id="353167"/>
<dbReference type="MGI" id="MGI:2681264">
    <property type="gene designation" value="Tas2r123"/>
</dbReference>
<dbReference type="VEuPathDB" id="HostDB:ENSMUSG00000057381"/>
<dbReference type="eggNOG" id="ENOG502SKRK">
    <property type="taxonomic scope" value="Eukaryota"/>
</dbReference>
<dbReference type="GeneTree" id="ENSGT01100000263477"/>
<dbReference type="HOGENOM" id="CLU_072337_3_0_1"/>
<dbReference type="InParanoid" id="P59528"/>
<dbReference type="OrthoDB" id="8876749at2759"/>
<dbReference type="PhylomeDB" id="P59528"/>
<dbReference type="TreeFam" id="TF335891"/>
<dbReference type="BioGRID-ORCS" id="353167">
    <property type="hits" value="0 hits in 76 CRISPR screens"/>
</dbReference>
<dbReference type="PRO" id="PR:P59528"/>
<dbReference type="Proteomes" id="UP000000589">
    <property type="component" value="Chromosome 6"/>
</dbReference>
<dbReference type="RNAct" id="P59528">
    <property type="molecule type" value="protein"/>
</dbReference>
<dbReference type="GO" id="GO:0016020">
    <property type="term" value="C:membrane"/>
    <property type="evidence" value="ECO:0007669"/>
    <property type="project" value="UniProtKB-SubCell"/>
</dbReference>
<dbReference type="GO" id="GO:0033038">
    <property type="term" value="F:bitter taste receptor activity"/>
    <property type="evidence" value="ECO:0007669"/>
    <property type="project" value="InterPro"/>
</dbReference>
<dbReference type="GO" id="GO:0004930">
    <property type="term" value="F:G protein-coupled receptor activity"/>
    <property type="evidence" value="ECO:0007669"/>
    <property type="project" value="UniProtKB-KW"/>
</dbReference>
<dbReference type="GO" id="GO:0001580">
    <property type="term" value="P:detection of chemical stimulus involved in sensory perception of bitter taste"/>
    <property type="evidence" value="ECO:0000304"/>
    <property type="project" value="MGI"/>
</dbReference>
<dbReference type="CDD" id="cd15019">
    <property type="entry name" value="7tm_TAS2R14-like"/>
    <property type="match status" value="1"/>
</dbReference>
<dbReference type="FunFam" id="1.20.1070.10:FF:000042">
    <property type="entry name" value="Taste receptor type 2 member 7"/>
    <property type="match status" value="1"/>
</dbReference>
<dbReference type="Gene3D" id="1.20.1070.10">
    <property type="entry name" value="Rhodopsin 7-helix transmembrane proteins"/>
    <property type="match status" value="1"/>
</dbReference>
<dbReference type="InterPro" id="IPR017452">
    <property type="entry name" value="GPCR_Rhodpsn_7TM"/>
</dbReference>
<dbReference type="InterPro" id="IPR007960">
    <property type="entry name" value="TAS2R"/>
</dbReference>
<dbReference type="PANTHER" id="PTHR11394">
    <property type="entry name" value="TASTE RECEPTOR TYPE 2"/>
    <property type="match status" value="1"/>
</dbReference>
<dbReference type="PANTHER" id="PTHR11394:SF80">
    <property type="entry name" value="TASTE RECEPTOR TYPE 2 MEMBER 123"/>
    <property type="match status" value="1"/>
</dbReference>
<dbReference type="Pfam" id="PF05296">
    <property type="entry name" value="TAS2R"/>
    <property type="match status" value="1"/>
</dbReference>
<dbReference type="SUPFAM" id="SSF81321">
    <property type="entry name" value="Family A G protein-coupled receptor-like"/>
    <property type="match status" value="1"/>
</dbReference>
<dbReference type="PROSITE" id="PS50262">
    <property type="entry name" value="G_PROTEIN_RECEP_F1_2"/>
    <property type="match status" value="1"/>
</dbReference>
<sequence length="333" mass="38032">MFSQKINYSHLFTFSITLYVEIVTGILGHGFIALVNIMDWVKRRRISSVDQILTALALTRFIYVLSMLICILLFMLCPHLPRRSEMLSAMGIFWVVNSHFSIWLTTCLGVFYFLKIANFSNSFFLYLKWRVKKVILIIILASLIFLTLHILSLGIYDQFSIAAYVGNMSYSLTDLTQFSSTFLFSNSSNVFLITNSSHVFLPINSLFMLIPFTVSLVAFLMLIFSLWKHHKKMQVNAKQPRDVSTMAHIKALQTVFSFLLLYAIYLLFLIIGILNLGLMEKIVILIFDHISGAVFPISHSFVLILGNSKLRQASLSVLPCLRCQSKDMDTMGL</sequence>
<comment type="function">
    <text evidence="1">Gustducin-coupled receptor implicated in the perception of bitter compounds in the oral cavity and the gastrointestinal tract. Signals through PLCB2 and the calcium-regulated cation channel TRPM5 (By similarity).</text>
</comment>
<comment type="subcellular location">
    <subcellularLocation>
        <location>Membrane</location>
        <topology>Multi-pass membrane protein</topology>
    </subcellularLocation>
</comment>
<comment type="tissue specificity">
    <text evidence="3">Expressed in subsets of taste receptor cells of the tongue and palate epithelium and exclusively in gustducin-positive cells. Expressed in the duodenum, antrum and fundus (part of the stomach).</text>
</comment>
<comment type="miscellaneous">
    <text>Several bitter taste receptors are expressed in a single taste receptor cell.</text>
</comment>
<comment type="similarity">
    <text evidence="4">Belongs to the G-protein coupled receptor T2R family.</text>
</comment>
<comment type="caution">
    <text evidence="4">This protein was previously referred to as T2R2 but is now considered to be an ortholog of rat TAS2R23.</text>
</comment>
<proteinExistence type="evidence at transcript level"/>
<keyword id="KW-0297">G-protein coupled receptor</keyword>
<keyword id="KW-0325">Glycoprotein</keyword>
<keyword id="KW-0472">Membrane</keyword>
<keyword id="KW-0675">Receptor</keyword>
<keyword id="KW-1185">Reference proteome</keyword>
<keyword id="KW-0716">Sensory transduction</keyword>
<keyword id="KW-0919">Taste</keyword>
<keyword id="KW-0807">Transducer</keyword>
<keyword id="KW-0812">Transmembrane</keyword>
<keyword id="KW-1133">Transmembrane helix</keyword>
<name>TR123_MOUSE</name>
<accession>P59528</accession>
<accession>Q7M714</accession>
<organism>
    <name type="scientific">Mus musculus</name>
    <name type="common">Mouse</name>
    <dbReference type="NCBI Taxonomy" id="10090"/>
    <lineage>
        <taxon>Eukaryota</taxon>
        <taxon>Metazoa</taxon>
        <taxon>Chordata</taxon>
        <taxon>Craniata</taxon>
        <taxon>Vertebrata</taxon>
        <taxon>Euteleostomi</taxon>
        <taxon>Mammalia</taxon>
        <taxon>Eutheria</taxon>
        <taxon>Euarchontoglires</taxon>
        <taxon>Glires</taxon>
        <taxon>Rodentia</taxon>
        <taxon>Myomorpha</taxon>
        <taxon>Muroidea</taxon>
        <taxon>Muridae</taxon>
        <taxon>Murinae</taxon>
        <taxon>Mus</taxon>
        <taxon>Mus</taxon>
    </lineage>
</organism>
<evidence type="ECO:0000250" key="1"/>
<evidence type="ECO:0000255" key="2"/>
<evidence type="ECO:0000269" key="3">
    <source>
    </source>
</evidence>
<evidence type="ECO:0000305" key="4"/>
<protein>
    <recommendedName>
        <fullName>Taste receptor type 2 member 123</fullName>
        <shortName>T2R123</shortName>
    </recommendedName>
    <alternativeName>
        <fullName>STC9-2</fullName>
    </alternativeName>
    <alternativeName>
        <fullName>Taste receptor type 2 member 23</fullName>
        <shortName>T2R23</shortName>
        <shortName>mT2R55</shortName>
    </alternativeName>
</protein>
<gene>
    <name type="primary">Tas2r123</name>
    <name type="synonym">T2r55</name>
    <name type="synonym">Tas2r23</name>
</gene>